<sequence length="228" mass="25044">MEGLTDRQLEVLRFIASQIEDHGYPPTIREIGEALDIRSTNGVNDHLKALERKGYLSRDPVKSRALIPTSAAREALGGGETGSNVVPLVRGPARPGSRMIEIPIVGRVAAGMPILAQERVEDTVQVDAFLLGTNKKVYGLRVQGDSMIGDGILPGDYVFVKKQLNADDGEIVVAMIDDEATVKRVYFEGDRVRFQPSNPRMAPIYVRHSDFRSTMILGVVVGVYRKLT</sequence>
<organism>
    <name type="scientific">Anaeromyxobacter dehalogenans (strain 2CP-1 / ATCC BAA-258)</name>
    <dbReference type="NCBI Taxonomy" id="455488"/>
    <lineage>
        <taxon>Bacteria</taxon>
        <taxon>Pseudomonadati</taxon>
        <taxon>Myxococcota</taxon>
        <taxon>Myxococcia</taxon>
        <taxon>Myxococcales</taxon>
        <taxon>Cystobacterineae</taxon>
        <taxon>Anaeromyxobacteraceae</taxon>
        <taxon>Anaeromyxobacter</taxon>
    </lineage>
</organism>
<comment type="function">
    <text evidence="1">Represses a number of genes involved in the response to DNA damage (SOS response), including recA and lexA. In the presence of single-stranded DNA, RecA interacts with LexA causing an autocatalytic cleavage which disrupts the DNA-binding part of LexA, leading to derepression of the SOS regulon and eventually DNA repair.</text>
</comment>
<comment type="catalytic activity">
    <reaction evidence="1">
        <text>Hydrolysis of Ala-|-Gly bond in repressor LexA.</text>
        <dbReference type="EC" id="3.4.21.88"/>
    </reaction>
</comment>
<comment type="subunit">
    <text evidence="1">Homodimer.</text>
</comment>
<comment type="similarity">
    <text evidence="1">Belongs to the peptidase S24 family.</text>
</comment>
<evidence type="ECO:0000255" key="1">
    <source>
        <dbReference type="HAMAP-Rule" id="MF_00015"/>
    </source>
</evidence>
<proteinExistence type="inferred from homology"/>
<reference key="1">
    <citation type="submission" date="2009-01" db="EMBL/GenBank/DDBJ databases">
        <title>Complete sequence of Anaeromyxobacter dehalogenans 2CP-1.</title>
        <authorList>
            <person name="Lucas S."/>
            <person name="Copeland A."/>
            <person name="Lapidus A."/>
            <person name="Glavina del Rio T."/>
            <person name="Dalin E."/>
            <person name="Tice H."/>
            <person name="Bruce D."/>
            <person name="Goodwin L."/>
            <person name="Pitluck S."/>
            <person name="Saunders E."/>
            <person name="Brettin T."/>
            <person name="Detter J.C."/>
            <person name="Han C."/>
            <person name="Larimer F."/>
            <person name="Land M."/>
            <person name="Hauser L."/>
            <person name="Kyrpides N."/>
            <person name="Ovchinnikova G."/>
            <person name="Beliaev A.S."/>
            <person name="Richardson P."/>
        </authorList>
    </citation>
    <scope>NUCLEOTIDE SEQUENCE [LARGE SCALE GENOMIC DNA]</scope>
    <source>
        <strain>2CP-1 / ATCC BAA-258</strain>
    </source>
</reference>
<keyword id="KW-0068">Autocatalytic cleavage</keyword>
<keyword id="KW-0227">DNA damage</keyword>
<keyword id="KW-0234">DNA repair</keyword>
<keyword id="KW-0235">DNA replication</keyword>
<keyword id="KW-0238">DNA-binding</keyword>
<keyword id="KW-0378">Hydrolase</keyword>
<keyword id="KW-0678">Repressor</keyword>
<keyword id="KW-0742">SOS response</keyword>
<keyword id="KW-0804">Transcription</keyword>
<keyword id="KW-0805">Transcription regulation</keyword>
<gene>
    <name evidence="1" type="primary">lexA</name>
    <name type="ordered locus">A2cp1_2238</name>
</gene>
<name>LEXA_ANAD2</name>
<accession>B8JA57</accession>
<protein>
    <recommendedName>
        <fullName evidence="1">LexA repressor</fullName>
        <ecNumber evidence="1">3.4.21.88</ecNumber>
    </recommendedName>
</protein>
<feature type="chain" id="PRO_1000116593" description="LexA repressor">
    <location>
        <begin position="1"/>
        <end position="228"/>
    </location>
</feature>
<feature type="DNA-binding region" description="H-T-H motif" evidence="1">
    <location>
        <begin position="28"/>
        <end position="48"/>
    </location>
</feature>
<feature type="active site" description="For autocatalytic cleavage activity" evidence="1">
    <location>
        <position position="146"/>
    </location>
</feature>
<feature type="active site" description="For autocatalytic cleavage activity" evidence="1">
    <location>
        <position position="183"/>
    </location>
</feature>
<feature type="site" description="Cleavage; by autolysis" evidence="1">
    <location>
        <begin position="110"/>
        <end position="111"/>
    </location>
</feature>
<dbReference type="EC" id="3.4.21.88" evidence="1"/>
<dbReference type="EMBL" id="CP001359">
    <property type="protein sequence ID" value="ACL65576.1"/>
    <property type="molecule type" value="Genomic_DNA"/>
</dbReference>
<dbReference type="RefSeq" id="WP_012633414.1">
    <property type="nucleotide sequence ID" value="NC_011891.1"/>
</dbReference>
<dbReference type="SMR" id="B8JA57"/>
<dbReference type="MEROPS" id="S24.001"/>
<dbReference type="KEGG" id="acp:A2cp1_2238"/>
<dbReference type="HOGENOM" id="CLU_066192_45_1_7"/>
<dbReference type="Proteomes" id="UP000007089">
    <property type="component" value="Chromosome"/>
</dbReference>
<dbReference type="GO" id="GO:0003677">
    <property type="term" value="F:DNA binding"/>
    <property type="evidence" value="ECO:0007669"/>
    <property type="project" value="UniProtKB-UniRule"/>
</dbReference>
<dbReference type="GO" id="GO:0004252">
    <property type="term" value="F:serine-type endopeptidase activity"/>
    <property type="evidence" value="ECO:0007669"/>
    <property type="project" value="UniProtKB-UniRule"/>
</dbReference>
<dbReference type="GO" id="GO:0006281">
    <property type="term" value="P:DNA repair"/>
    <property type="evidence" value="ECO:0007669"/>
    <property type="project" value="UniProtKB-UniRule"/>
</dbReference>
<dbReference type="GO" id="GO:0006260">
    <property type="term" value="P:DNA replication"/>
    <property type="evidence" value="ECO:0007669"/>
    <property type="project" value="UniProtKB-UniRule"/>
</dbReference>
<dbReference type="GO" id="GO:0045892">
    <property type="term" value="P:negative regulation of DNA-templated transcription"/>
    <property type="evidence" value="ECO:0007669"/>
    <property type="project" value="UniProtKB-UniRule"/>
</dbReference>
<dbReference type="GO" id="GO:0006508">
    <property type="term" value="P:proteolysis"/>
    <property type="evidence" value="ECO:0007669"/>
    <property type="project" value="InterPro"/>
</dbReference>
<dbReference type="GO" id="GO:0009432">
    <property type="term" value="P:SOS response"/>
    <property type="evidence" value="ECO:0007669"/>
    <property type="project" value="UniProtKB-UniRule"/>
</dbReference>
<dbReference type="CDD" id="cd06529">
    <property type="entry name" value="S24_LexA-like"/>
    <property type="match status" value="1"/>
</dbReference>
<dbReference type="FunFam" id="1.10.10.10:FF:000009">
    <property type="entry name" value="LexA repressor"/>
    <property type="match status" value="1"/>
</dbReference>
<dbReference type="FunFam" id="2.10.109.10:FF:000001">
    <property type="entry name" value="LexA repressor"/>
    <property type="match status" value="1"/>
</dbReference>
<dbReference type="Gene3D" id="2.10.109.10">
    <property type="entry name" value="Umud Fragment, subunit A"/>
    <property type="match status" value="1"/>
</dbReference>
<dbReference type="Gene3D" id="1.10.10.10">
    <property type="entry name" value="Winged helix-like DNA-binding domain superfamily/Winged helix DNA-binding domain"/>
    <property type="match status" value="1"/>
</dbReference>
<dbReference type="HAMAP" id="MF_00015">
    <property type="entry name" value="LexA"/>
    <property type="match status" value="1"/>
</dbReference>
<dbReference type="InterPro" id="IPR006200">
    <property type="entry name" value="LexA"/>
</dbReference>
<dbReference type="InterPro" id="IPR039418">
    <property type="entry name" value="LexA-like"/>
</dbReference>
<dbReference type="InterPro" id="IPR036286">
    <property type="entry name" value="LexA/Signal_pep-like_sf"/>
</dbReference>
<dbReference type="InterPro" id="IPR006199">
    <property type="entry name" value="LexA_DNA-bd_dom"/>
</dbReference>
<dbReference type="InterPro" id="IPR050077">
    <property type="entry name" value="LexA_repressor"/>
</dbReference>
<dbReference type="InterPro" id="IPR006197">
    <property type="entry name" value="Peptidase_S24_LexA"/>
</dbReference>
<dbReference type="InterPro" id="IPR015927">
    <property type="entry name" value="Peptidase_S24_S26A/B/C"/>
</dbReference>
<dbReference type="InterPro" id="IPR036388">
    <property type="entry name" value="WH-like_DNA-bd_sf"/>
</dbReference>
<dbReference type="InterPro" id="IPR036390">
    <property type="entry name" value="WH_DNA-bd_sf"/>
</dbReference>
<dbReference type="NCBIfam" id="TIGR00498">
    <property type="entry name" value="lexA"/>
    <property type="match status" value="1"/>
</dbReference>
<dbReference type="PANTHER" id="PTHR33516">
    <property type="entry name" value="LEXA REPRESSOR"/>
    <property type="match status" value="1"/>
</dbReference>
<dbReference type="PANTHER" id="PTHR33516:SF2">
    <property type="entry name" value="LEXA REPRESSOR-RELATED"/>
    <property type="match status" value="1"/>
</dbReference>
<dbReference type="Pfam" id="PF01726">
    <property type="entry name" value="LexA_DNA_bind"/>
    <property type="match status" value="1"/>
</dbReference>
<dbReference type="Pfam" id="PF00717">
    <property type="entry name" value="Peptidase_S24"/>
    <property type="match status" value="1"/>
</dbReference>
<dbReference type="PRINTS" id="PR00726">
    <property type="entry name" value="LEXASERPTASE"/>
</dbReference>
<dbReference type="SUPFAM" id="SSF51306">
    <property type="entry name" value="LexA/Signal peptidase"/>
    <property type="match status" value="1"/>
</dbReference>
<dbReference type="SUPFAM" id="SSF46785">
    <property type="entry name" value="Winged helix' DNA-binding domain"/>
    <property type="match status" value="1"/>
</dbReference>